<name>HIS8_HALLT</name>
<sequence>MQPRDLSDHSPYVPGRGVEEVARDRGLDPDDLIKLSSNENPHGPSPAAVDAIREHADRVHQYPKSSHTDLTAKLAEKWDVSTEQVWVSPGADGSIDYLSRAALEPGDEVLVPEPGFAYYAMSARYHHGEVSEYALSPDDGFAQDAETVLSAYGGERIVYLTSPHNPSGSVMPLDEVRAIADATAEETLVVVDEAYGEFAEVDSAIPLVDERDDVAVLRTFSKAYGLAGLRIGYSVVPEAWGEAYARVNTPFAANELACRAALAALDDEEHVAESVETARWAREYIADELDAPTVESAGNFVLAEVGDAERVAEEAQERGVIIRDCTSFGLPNHVRISTGTREGTREAVARLNETLADLGLGVRA</sequence>
<organism>
    <name type="scientific">Halorubrum lacusprofundi (strain ATCC 49239 / DSM 5036 / JCM 8891 / ACAM 34)</name>
    <dbReference type="NCBI Taxonomy" id="416348"/>
    <lineage>
        <taxon>Archaea</taxon>
        <taxon>Methanobacteriati</taxon>
        <taxon>Methanobacteriota</taxon>
        <taxon>Stenosarchaea group</taxon>
        <taxon>Halobacteria</taxon>
        <taxon>Halobacteriales</taxon>
        <taxon>Haloferacaceae</taxon>
        <taxon>Halorubrum</taxon>
    </lineage>
</organism>
<keyword id="KW-0028">Amino-acid biosynthesis</keyword>
<keyword id="KW-0032">Aminotransferase</keyword>
<keyword id="KW-0368">Histidine biosynthesis</keyword>
<keyword id="KW-0663">Pyridoxal phosphate</keyword>
<keyword id="KW-1185">Reference proteome</keyword>
<keyword id="KW-0808">Transferase</keyword>
<reference key="1">
    <citation type="journal article" date="2016" name="Stand. Genomic Sci.">
        <title>Complete genome sequence of the Antarctic Halorubrum lacusprofundi type strain ACAM 34.</title>
        <authorList>
            <person name="Anderson I.J."/>
            <person name="DasSarma P."/>
            <person name="Lucas S."/>
            <person name="Copeland A."/>
            <person name="Lapidus A."/>
            <person name="Del Rio T.G."/>
            <person name="Tice H."/>
            <person name="Dalin E."/>
            <person name="Bruce D.C."/>
            <person name="Goodwin L."/>
            <person name="Pitluck S."/>
            <person name="Sims D."/>
            <person name="Brettin T.S."/>
            <person name="Detter J.C."/>
            <person name="Han C.S."/>
            <person name="Larimer F."/>
            <person name="Hauser L."/>
            <person name="Land M."/>
            <person name="Ivanova N."/>
            <person name="Richardson P."/>
            <person name="Cavicchioli R."/>
            <person name="DasSarma S."/>
            <person name="Woese C.R."/>
            <person name="Kyrpides N.C."/>
        </authorList>
    </citation>
    <scope>NUCLEOTIDE SEQUENCE [LARGE SCALE GENOMIC DNA]</scope>
    <source>
        <strain>ATCC 49239 / DSM 5036 / JCM 8891 / ACAM 34</strain>
    </source>
</reference>
<gene>
    <name evidence="1" type="primary">hisC</name>
    <name type="ordered locus">Hlac_1344</name>
</gene>
<evidence type="ECO:0000255" key="1">
    <source>
        <dbReference type="HAMAP-Rule" id="MF_01023"/>
    </source>
</evidence>
<evidence type="ECO:0000256" key="2">
    <source>
        <dbReference type="SAM" id="MobiDB-lite"/>
    </source>
</evidence>
<proteinExistence type="inferred from homology"/>
<comment type="catalytic activity">
    <reaction evidence="1">
        <text>L-histidinol phosphate + 2-oxoglutarate = 3-(imidazol-4-yl)-2-oxopropyl phosphate + L-glutamate</text>
        <dbReference type="Rhea" id="RHEA:23744"/>
        <dbReference type="ChEBI" id="CHEBI:16810"/>
        <dbReference type="ChEBI" id="CHEBI:29985"/>
        <dbReference type="ChEBI" id="CHEBI:57766"/>
        <dbReference type="ChEBI" id="CHEBI:57980"/>
        <dbReference type="EC" id="2.6.1.9"/>
    </reaction>
</comment>
<comment type="cofactor">
    <cofactor evidence="1">
        <name>pyridoxal 5'-phosphate</name>
        <dbReference type="ChEBI" id="CHEBI:597326"/>
    </cofactor>
</comment>
<comment type="pathway">
    <text evidence="1">Amino-acid biosynthesis; L-histidine biosynthesis; L-histidine from 5-phospho-alpha-D-ribose 1-diphosphate: step 7/9.</text>
</comment>
<comment type="similarity">
    <text evidence="1">Belongs to the class-II pyridoxal-phosphate-dependent aminotransferase family. Histidinol-phosphate aminotransferase subfamily.</text>
</comment>
<accession>B9LNJ8</accession>
<feature type="chain" id="PRO_1000149098" description="Histidinol-phosphate aminotransferase">
    <location>
        <begin position="1"/>
        <end position="364"/>
    </location>
</feature>
<feature type="region of interest" description="Disordered" evidence="2">
    <location>
        <begin position="1"/>
        <end position="46"/>
    </location>
</feature>
<feature type="compositionally biased region" description="Basic and acidic residues" evidence="2">
    <location>
        <begin position="17"/>
        <end position="33"/>
    </location>
</feature>
<feature type="modified residue" description="N6-(pyridoxal phosphate)lysine" evidence="1">
    <location>
        <position position="222"/>
    </location>
</feature>
<dbReference type="EC" id="2.6.1.9" evidence="1"/>
<dbReference type="EMBL" id="CP001365">
    <property type="protein sequence ID" value="ACM56936.1"/>
    <property type="molecule type" value="Genomic_DNA"/>
</dbReference>
<dbReference type="RefSeq" id="WP_015910078.1">
    <property type="nucleotide sequence ID" value="NC_012029.1"/>
</dbReference>
<dbReference type="SMR" id="B9LNJ8"/>
<dbReference type="GeneID" id="7399439"/>
<dbReference type="KEGG" id="hla:Hlac_1344"/>
<dbReference type="eggNOG" id="arCOG04273">
    <property type="taxonomic scope" value="Archaea"/>
</dbReference>
<dbReference type="HOGENOM" id="CLU_017584_3_3_2"/>
<dbReference type="UniPathway" id="UPA00031">
    <property type="reaction ID" value="UER00012"/>
</dbReference>
<dbReference type="Proteomes" id="UP000000740">
    <property type="component" value="Chromosome 1"/>
</dbReference>
<dbReference type="GO" id="GO:0004400">
    <property type="term" value="F:histidinol-phosphate transaminase activity"/>
    <property type="evidence" value="ECO:0007669"/>
    <property type="project" value="UniProtKB-UniRule"/>
</dbReference>
<dbReference type="GO" id="GO:0030170">
    <property type="term" value="F:pyridoxal phosphate binding"/>
    <property type="evidence" value="ECO:0007669"/>
    <property type="project" value="InterPro"/>
</dbReference>
<dbReference type="GO" id="GO:0000105">
    <property type="term" value="P:L-histidine biosynthetic process"/>
    <property type="evidence" value="ECO:0007669"/>
    <property type="project" value="UniProtKB-UniRule"/>
</dbReference>
<dbReference type="CDD" id="cd00609">
    <property type="entry name" value="AAT_like"/>
    <property type="match status" value="1"/>
</dbReference>
<dbReference type="Gene3D" id="3.90.1150.10">
    <property type="entry name" value="Aspartate Aminotransferase, domain 1"/>
    <property type="match status" value="1"/>
</dbReference>
<dbReference type="Gene3D" id="3.40.640.10">
    <property type="entry name" value="Type I PLP-dependent aspartate aminotransferase-like (Major domain)"/>
    <property type="match status" value="1"/>
</dbReference>
<dbReference type="HAMAP" id="MF_01023">
    <property type="entry name" value="HisC_aminotrans_2"/>
    <property type="match status" value="1"/>
</dbReference>
<dbReference type="InterPro" id="IPR001917">
    <property type="entry name" value="Aminotrans_II_pyridoxalP_BS"/>
</dbReference>
<dbReference type="InterPro" id="IPR004839">
    <property type="entry name" value="Aminotransferase_I/II_large"/>
</dbReference>
<dbReference type="InterPro" id="IPR005861">
    <property type="entry name" value="HisP_aminotrans"/>
</dbReference>
<dbReference type="InterPro" id="IPR050106">
    <property type="entry name" value="HistidinolP_aminotransfase"/>
</dbReference>
<dbReference type="InterPro" id="IPR015424">
    <property type="entry name" value="PyrdxlP-dep_Trfase"/>
</dbReference>
<dbReference type="InterPro" id="IPR015421">
    <property type="entry name" value="PyrdxlP-dep_Trfase_major"/>
</dbReference>
<dbReference type="InterPro" id="IPR015422">
    <property type="entry name" value="PyrdxlP-dep_Trfase_small"/>
</dbReference>
<dbReference type="NCBIfam" id="TIGR01141">
    <property type="entry name" value="hisC"/>
    <property type="match status" value="1"/>
</dbReference>
<dbReference type="PANTHER" id="PTHR43643:SF6">
    <property type="entry name" value="HISTIDINOL-PHOSPHATE AMINOTRANSFERASE"/>
    <property type="match status" value="1"/>
</dbReference>
<dbReference type="PANTHER" id="PTHR43643">
    <property type="entry name" value="HISTIDINOL-PHOSPHATE AMINOTRANSFERASE 2"/>
    <property type="match status" value="1"/>
</dbReference>
<dbReference type="Pfam" id="PF00155">
    <property type="entry name" value="Aminotran_1_2"/>
    <property type="match status" value="1"/>
</dbReference>
<dbReference type="SUPFAM" id="SSF53383">
    <property type="entry name" value="PLP-dependent transferases"/>
    <property type="match status" value="1"/>
</dbReference>
<dbReference type="PROSITE" id="PS00599">
    <property type="entry name" value="AA_TRANSFER_CLASS_2"/>
    <property type="match status" value="1"/>
</dbReference>
<protein>
    <recommendedName>
        <fullName evidence="1">Histidinol-phosphate aminotransferase</fullName>
        <ecNumber evidence="1">2.6.1.9</ecNumber>
    </recommendedName>
    <alternativeName>
        <fullName evidence="1">Imidazole acetol-phosphate transaminase</fullName>
    </alternativeName>
</protein>